<gene>
    <name evidence="1" type="primary">panB</name>
    <name type="ordered locus">Teth514_0427</name>
</gene>
<proteinExistence type="inferred from homology"/>
<name>PANB_THEPX</name>
<dbReference type="EC" id="2.1.2.11" evidence="1"/>
<dbReference type="EMBL" id="CP000923">
    <property type="protein sequence ID" value="ABY91737.1"/>
    <property type="molecule type" value="Genomic_DNA"/>
</dbReference>
<dbReference type="RefSeq" id="WP_009051762.1">
    <property type="nucleotide sequence ID" value="NC_010320.1"/>
</dbReference>
<dbReference type="SMR" id="B0K365"/>
<dbReference type="KEGG" id="tex:Teth514_0427"/>
<dbReference type="HOGENOM" id="CLU_036645_1_0_9"/>
<dbReference type="UniPathway" id="UPA00028">
    <property type="reaction ID" value="UER00003"/>
</dbReference>
<dbReference type="Proteomes" id="UP000002155">
    <property type="component" value="Chromosome"/>
</dbReference>
<dbReference type="GO" id="GO:0005737">
    <property type="term" value="C:cytoplasm"/>
    <property type="evidence" value="ECO:0007669"/>
    <property type="project" value="UniProtKB-SubCell"/>
</dbReference>
<dbReference type="GO" id="GO:0003864">
    <property type="term" value="F:3-methyl-2-oxobutanoate hydroxymethyltransferase activity"/>
    <property type="evidence" value="ECO:0007669"/>
    <property type="project" value="UniProtKB-UniRule"/>
</dbReference>
<dbReference type="GO" id="GO:0000287">
    <property type="term" value="F:magnesium ion binding"/>
    <property type="evidence" value="ECO:0007669"/>
    <property type="project" value="TreeGrafter"/>
</dbReference>
<dbReference type="GO" id="GO:0015940">
    <property type="term" value="P:pantothenate biosynthetic process"/>
    <property type="evidence" value="ECO:0007669"/>
    <property type="project" value="UniProtKB-UniRule"/>
</dbReference>
<dbReference type="CDD" id="cd06557">
    <property type="entry name" value="KPHMT-like"/>
    <property type="match status" value="1"/>
</dbReference>
<dbReference type="FunFam" id="3.20.20.60:FF:000003">
    <property type="entry name" value="3-methyl-2-oxobutanoate hydroxymethyltransferase"/>
    <property type="match status" value="1"/>
</dbReference>
<dbReference type="Gene3D" id="3.20.20.60">
    <property type="entry name" value="Phosphoenolpyruvate-binding domains"/>
    <property type="match status" value="1"/>
</dbReference>
<dbReference type="HAMAP" id="MF_00156">
    <property type="entry name" value="PanB"/>
    <property type="match status" value="1"/>
</dbReference>
<dbReference type="InterPro" id="IPR003700">
    <property type="entry name" value="Pantoate_hydroxy_MeTrfase"/>
</dbReference>
<dbReference type="InterPro" id="IPR015813">
    <property type="entry name" value="Pyrv/PenolPyrv_kinase-like_dom"/>
</dbReference>
<dbReference type="InterPro" id="IPR040442">
    <property type="entry name" value="Pyrv_kinase-like_dom_sf"/>
</dbReference>
<dbReference type="NCBIfam" id="TIGR00222">
    <property type="entry name" value="panB"/>
    <property type="match status" value="1"/>
</dbReference>
<dbReference type="NCBIfam" id="NF001452">
    <property type="entry name" value="PRK00311.1"/>
    <property type="match status" value="1"/>
</dbReference>
<dbReference type="PANTHER" id="PTHR20881">
    <property type="entry name" value="3-METHYL-2-OXOBUTANOATE HYDROXYMETHYLTRANSFERASE"/>
    <property type="match status" value="1"/>
</dbReference>
<dbReference type="PANTHER" id="PTHR20881:SF0">
    <property type="entry name" value="3-METHYL-2-OXOBUTANOATE HYDROXYMETHYLTRANSFERASE"/>
    <property type="match status" value="1"/>
</dbReference>
<dbReference type="Pfam" id="PF02548">
    <property type="entry name" value="Pantoate_transf"/>
    <property type="match status" value="1"/>
</dbReference>
<dbReference type="PIRSF" id="PIRSF000388">
    <property type="entry name" value="Pantoate_hydroxy_MeTrfase"/>
    <property type="match status" value="1"/>
</dbReference>
<dbReference type="SUPFAM" id="SSF51621">
    <property type="entry name" value="Phosphoenolpyruvate/pyruvate domain"/>
    <property type="match status" value="1"/>
</dbReference>
<keyword id="KW-0963">Cytoplasm</keyword>
<keyword id="KW-0460">Magnesium</keyword>
<keyword id="KW-0479">Metal-binding</keyword>
<keyword id="KW-0566">Pantothenate biosynthesis</keyword>
<keyword id="KW-0808">Transferase</keyword>
<accession>B0K365</accession>
<feature type="chain" id="PRO_1000097014" description="3-methyl-2-oxobutanoate hydroxymethyltransferase">
    <location>
        <begin position="1"/>
        <end position="274"/>
    </location>
</feature>
<feature type="active site" description="Proton acceptor" evidence="1">
    <location>
        <position position="184"/>
    </location>
</feature>
<feature type="binding site" evidence="1">
    <location>
        <begin position="46"/>
        <end position="47"/>
    </location>
    <ligand>
        <name>3-methyl-2-oxobutanoate</name>
        <dbReference type="ChEBI" id="CHEBI:11851"/>
    </ligand>
</feature>
<feature type="binding site" evidence="1">
    <location>
        <position position="46"/>
    </location>
    <ligand>
        <name>Mg(2+)</name>
        <dbReference type="ChEBI" id="CHEBI:18420"/>
    </ligand>
</feature>
<feature type="binding site" evidence="1">
    <location>
        <position position="85"/>
    </location>
    <ligand>
        <name>3-methyl-2-oxobutanoate</name>
        <dbReference type="ChEBI" id="CHEBI:11851"/>
    </ligand>
</feature>
<feature type="binding site" evidence="1">
    <location>
        <position position="85"/>
    </location>
    <ligand>
        <name>Mg(2+)</name>
        <dbReference type="ChEBI" id="CHEBI:18420"/>
    </ligand>
</feature>
<feature type="binding site" evidence="1">
    <location>
        <position position="115"/>
    </location>
    <ligand>
        <name>3-methyl-2-oxobutanoate</name>
        <dbReference type="ChEBI" id="CHEBI:11851"/>
    </ligand>
</feature>
<feature type="binding site" evidence="1">
    <location>
        <position position="117"/>
    </location>
    <ligand>
        <name>Mg(2+)</name>
        <dbReference type="ChEBI" id="CHEBI:18420"/>
    </ligand>
</feature>
<organism>
    <name type="scientific">Thermoanaerobacter sp. (strain X514)</name>
    <dbReference type="NCBI Taxonomy" id="399726"/>
    <lineage>
        <taxon>Bacteria</taxon>
        <taxon>Bacillati</taxon>
        <taxon>Bacillota</taxon>
        <taxon>Clostridia</taxon>
        <taxon>Thermoanaerobacterales</taxon>
        <taxon>Thermoanaerobacteraceae</taxon>
        <taxon>Thermoanaerobacter</taxon>
    </lineage>
</organism>
<reference key="1">
    <citation type="submission" date="2008-01" db="EMBL/GenBank/DDBJ databases">
        <title>Complete sequence of Thermoanaerobacter sp. X514.</title>
        <authorList>
            <consortium name="US DOE Joint Genome Institute"/>
            <person name="Copeland A."/>
            <person name="Lucas S."/>
            <person name="Lapidus A."/>
            <person name="Barry K."/>
            <person name="Glavina del Rio T."/>
            <person name="Dalin E."/>
            <person name="Tice H."/>
            <person name="Pitluck S."/>
            <person name="Bruce D."/>
            <person name="Goodwin L."/>
            <person name="Saunders E."/>
            <person name="Brettin T."/>
            <person name="Detter J.C."/>
            <person name="Han C."/>
            <person name="Schmutz J."/>
            <person name="Larimer F."/>
            <person name="Land M."/>
            <person name="Hauser L."/>
            <person name="Kyrpides N."/>
            <person name="Kim E."/>
            <person name="Hemme C."/>
            <person name="Fields M.W."/>
            <person name="He Z."/>
            <person name="Zhou J."/>
            <person name="Richardson P."/>
        </authorList>
    </citation>
    <scope>NUCLEOTIDE SEQUENCE [LARGE SCALE GENOMIC DNA]</scope>
    <source>
        <strain>X514</strain>
    </source>
</reference>
<sequence length="274" mass="29988">MEEKVSTLTLRKFKKEGRKITALTAYDFPTAKILDNCGIDMILVGDSLGMVVLGYESTIPVTMEDMIHHTKAVSRAVNRAFIVADMPFMSYHISKEQAMTNAARLIAEGGAHAVKLEGGEEIASIVKAIVDAGIPVVGHLGLTPQSVHQLGGYKVQGKEKEQAKKIFNDAKVLEQAGICALVLESIPMELAKNITENISVPTIGIGAGPYCDGQILVTHDMLGITQGHRPKFVKQYADIEKIMIDGINAYIKEVQQVLFPDEEHSFTLEKRENK</sequence>
<comment type="function">
    <text evidence="1">Catalyzes the reversible reaction in which hydroxymethyl group from 5,10-methylenetetrahydrofolate is transferred onto alpha-ketoisovalerate to form ketopantoate.</text>
</comment>
<comment type="catalytic activity">
    <reaction evidence="1">
        <text>3-methyl-2-oxobutanoate + (6R)-5,10-methylene-5,6,7,8-tetrahydrofolate + H2O = 2-dehydropantoate + (6S)-5,6,7,8-tetrahydrofolate</text>
        <dbReference type="Rhea" id="RHEA:11824"/>
        <dbReference type="ChEBI" id="CHEBI:11561"/>
        <dbReference type="ChEBI" id="CHEBI:11851"/>
        <dbReference type="ChEBI" id="CHEBI:15377"/>
        <dbReference type="ChEBI" id="CHEBI:15636"/>
        <dbReference type="ChEBI" id="CHEBI:57453"/>
        <dbReference type="EC" id="2.1.2.11"/>
    </reaction>
</comment>
<comment type="cofactor">
    <cofactor evidence="1">
        <name>Mg(2+)</name>
        <dbReference type="ChEBI" id="CHEBI:18420"/>
    </cofactor>
    <text evidence="1">Binds 1 Mg(2+) ion per subunit.</text>
</comment>
<comment type="pathway">
    <text evidence="1">Cofactor biosynthesis; (R)-pantothenate biosynthesis; (R)-pantoate from 3-methyl-2-oxobutanoate: step 1/2.</text>
</comment>
<comment type="subunit">
    <text evidence="1">Homodecamer; pentamer of dimers.</text>
</comment>
<comment type="subcellular location">
    <subcellularLocation>
        <location evidence="1">Cytoplasm</location>
    </subcellularLocation>
</comment>
<comment type="similarity">
    <text evidence="1">Belongs to the PanB family.</text>
</comment>
<evidence type="ECO:0000255" key="1">
    <source>
        <dbReference type="HAMAP-Rule" id="MF_00156"/>
    </source>
</evidence>
<protein>
    <recommendedName>
        <fullName evidence="1">3-methyl-2-oxobutanoate hydroxymethyltransferase</fullName>
        <ecNumber evidence="1">2.1.2.11</ecNumber>
    </recommendedName>
    <alternativeName>
        <fullName evidence="1">Ketopantoate hydroxymethyltransferase</fullName>
        <shortName evidence="1">KPHMT</shortName>
    </alternativeName>
</protein>